<keyword id="KW-0687">Ribonucleoprotein</keyword>
<keyword id="KW-0689">Ribosomal protein</keyword>
<keyword id="KW-0694">RNA-binding</keyword>
<keyword id="KW-0699">rRNA-binding</keyword>
<organism>
    <name type="scientific">Rickettsia africae (strain ESF-5)</name>
    <dbReference type="NCBI Taxonomy" id="347255"/>
    <lineage>
        <taxon>Bacteria</taxon>
        <taxon>Pseudomonadati</taxon>
        <taxon>Pseudomonadota</taxon>
        <taxon>Alphaproteobacteria</taxon>
        <taxon>Rickettsiales</taxon>
        <taxon>Rickettsiaceae</taxon>
        <taxon>Rickettsieae</taxon>
        <taxon>Rickettsia</taxon>
        <taxon>spotted fever group</taxon>
    </lineage>
</organism>
<name>RS20_RICAE</name>
<evidence type="ECO:0000255" key="1">
    <source>
        <dbReference type="HAMAP-Rule" id="MF_00500"/>
    </source>
</evidence>
<evidence type="ECO:0000305" key="2"/>
<accession>C3PP81</accession>
<proteinExistence type="inferred from homology"/>
<dbReference type="EMBL" id="CP001612">
    <property type="protein sequence ID" value="ACP53741.1"/>
    <property type="molecule type" value="Genomic_DNA"/>
</dbReference>
<dbReference type="RefSeq" id="WP_004997845.1">
    <property type="nucleotide sequence ID" value="NC_012633.1"/>
</dbReference>
<dbReference type="SMR" id="C3PP81"/>
<dbReference type="GeneID" id="95361460"/>
<dbReference type="KEGG" id="raf:RAF_ORF0886"/>
<dbReference type="HOGENOM" id="CLU_160655_3_0_5"/>
<dbReference type="Proteomes" id="UP000002305">
    <property type="component" value="Chromosome"/>
</dbReference>
<dbReference type="GO" id="GO:0015935">
    <property type="term" value="C:small ribosomal subunit"/>
    <property type="evidence" value="ECO:0007669"/>
    <property type="project" value="TreeGrafter"/>
</dbReference>
<dbReference type="GO" id="GO:0070181">
    <property type="term" value="F:small ribosomal subunit rRNA binding"/>
    <property type="evidence" value="ECO:0007669"/>
    <property type="project" value="TreeGrafter"/>
</dbReference>
<dbReference type="GO" id="GO:0003735">
    <property type="term" value="F:structural constituent of ribosome"/>
    <property type="evidence" value="ECO:0007669"/>
    <property type="project" value="InterPro"/>
</dbReference>
<dbReference type="GO" id="GO:0006412">
    <property type="term" value="P:translation"/>
    <property type="evidence" value="ECO:0007669"/>
    <property type="project" value="UniProtKB-UniRule"/>
</dbReference>
<dbReference type="Gene3D" id="1.20.58.110">
    <property type="entry name" value="Ribosomal protein S20"/>
    <property type="match status" value="1"/>
</dbReference>
<dbReference type="HAMAP" id="MF_00500">
    <property type="entry name" value="Ribosomal_bS20"/>
    <property type="match status" value="1"/>
</dbReference>
<dbReference type="InterPro" id="IPR002583">
    <property type="entry name" value="Ribosomal_bS20"/>
</dbReference>
<dbReference type="InterPro" id="IPR036510">
    <property type="entry name" value="Ribosomal_bS20_sf"/>
</dbReference>
<dbReference type="NCBIfam" id="TIGR00029">
    <property type="entry name" value="S20"/>
    <property type="match status" value="1"/>
</dbReference>
<dbReference type="PANTHER" id="PTHR33398">
    <property type="entry name" value="30S RIBOSOMAL PROTEIN S20"/>
    <property type="match status" value="1"/>
</dbReference>
<dbReference type="PANTHER" id="PTHR33398:SF1">
    <property type="entry name" value="SMALL RIBOSOMAL SUBUNIT PROTEIN BS20C"/>
    <property type="match status" value="1"/>
</dbReference>
<dbReference type="Pfam" id="PF01649">
    <property type="entry name" value="Ribosomal_S20p"/>
    <property type="match status" value="1"/>
</dbReference>
<dbReference type="SUPFAM" id="SSF46992">
    <property type="entry name" value="Ribosomal protein S20"/>
    <property type="match status" value="1"/>
</dbReference>
<protein>
    <recommendedName>
        <fullName evidence="1">Small ribosomal subunit protein bS20</fullName>
    </recommendedName>
    <alternativeName>
        <fullName evidence="2">30S ribosomal protein S20</fullName>
    </alternativeName>
</protein>
<sequence length="92" mass="10223">MANHSSAKKAARQTVKRTLINKKRSSAIKTFIKKVVHEISLGNKENANIALSVAQSKIMQGVKKNIIKLNTASRKISRLSRQIKSLKVNNTL</sequence>
<reference key="1">
    <citation type="journal article" date="2009" name="BMC Genomics">
        <title>Analysis of the Rickettsia africae genome reveals that virulence acquisition in Rickettsia species may be explained by genome reduction.</title>
        <authorList>
            <person name="Fournier P.-E."/>
            <person name="El Karkouri K."/>
            <person name="Leroy Q."/>
            <person name="Robert C."/>
            <person name="Giumelli B."/>
            <person name="Renesto P."/>
            <person name="Socolovschi C."/>
            <person name="Parola P."/>
            <person name="Audic S."/>
            <person name="Raoult D."/>
        </authorList>
    </citation>
    <scope>NUCLEOTIDE SEQUENCE [LARGE SCALE GENOMIC DNA]</scope>
    <source>
        <strain>ESF-5</strain>
    </source>
</reference>
<feature type="chain" id="PRO_1000206509" description="Small ribosomal subunit protein bS20">
    <location>
        <begin position="1"/>
        <end position="92"/>
    </location>
</feature>
<gene>
    <name evidence="1" type="primary">rpsT</name>
    <name type="ordered locus">RAF_ORF0886</name>
</gene>
<comment type="function">
    <text evidence="1">Binds directly to 16S ribosomal RNA.</text>
</comment>
<comment type="similarity">
    <text evidence="1">Belongs to the bacterial ribosomal protein bS20 family.</text>
</comment>